<name>NADE_EXISA</name>
<dbReference type="EC" id="6.3.1.5" evidence="1"/>
<dbReference type="EMBL" id="CP001615">
    <property type="protein sequence ID" value="ACQ71687.1"/>
    <property type="molecule type" value="Genomic_DNA"/>
</dbReference>
<dbReference type="RefSeq" id="WP_015881246.1">
    <property type="nucleotide sequence ID" value="NC_012673.1"/>
</dbReference>
<dbReference type="SMR" id="C4L5A2"/>
<dbReference type="STRING" id="360911.EAT1b_2773"/>
<dbReference type="KEGG" id="eat:EAT1b_2773"/>
<dbReference type="eggNOG" id="COG0171">
    <property type="taxonomic scope" value="Bacteria"/>
</dbReference>
<dbReference type="HOGENOM" id="CLU_059327_3_0_9"/>
<dbReference type="OrthoDB" id="9803818at2"/>
<dbReference type="UniPathway" id="UPA00253">
    <property type="reaction ID" value="UER00333"/>
</dbReference>
<dbReference type="Proteomes" id="UP000000716">
    <property type="component" value="Chromosome"/>
</dbReference>
<dbReference type="GO" id="GO:0005737">
    <property type="term" value="C:cytoplasm"/>
    <property type="evidence" value="ECO:0007669"/>
    <property type="project" value="InterPro"/>
</dbReference>
<dbReference type="GO" id="GO:0005524">
    <property type="term" value="F:ATP binding"/>
    <property type="evidence" value="ECO:0007669"/>
    <property type="project" value="UniProtKB-UniRule"/>
</dbReference>
<dbReference type="GO" id="GO:0004359">
    <property type="term" value="F:glutaminase activity"/>
    <property type="evidence" value="ECO:0007669"/>
    <property type="project" value="InterPro"/>
</dbReference>
<dbReference type="GO" id="GO:0046872">
    <property type="term" value="F:metal ion binding"/>
    <property type="evidence" value="ECO:0007669"/>
    <property type="project" value="UniProtKB-KW"/>
</dbReference>
<dbReference type="GO" id="GO:0003952">
    <property type="term" value="F:NAD+ synthase (glutamine-hydrolyzing) activity"/>
    <property type="evidence" value="ECO:0007669"/>
    <property type="project" value="InterPro"/>
</dbReference>
<dbReference type="GO" id="GO:0008795">
    <property type="term" value="F:NAD+ synthase activity"/>
    <property type="evidence" value="ECO:0007669"/>
    <property type="project" value="UniProtKB-UniRule"/>
</dbReference>
<dbReference type="GO" id="GO:0009435">
    <property type="term" value="P:NAD biosynthetic process"/>
    <property type="evidence" value="ECO:0007669"/>
    <property type="project" value="UniProtKB-UniRule"/>
</dbReference>
<dbReference type="CDD" id="cd00553">
    <property type="entry name" value="NAD_synthase"/>
    <property type="match status" value="1"/>
</dbReference>
<dbReference type="FunFam" id="3.40.50.620:FF:000015">
    <property type="entry name" value="NH(3)-dependent NAD(+) synthetase"/>
    <property type="match status" value="1"/>
</dbReference>
<dbReference type="Gene3D" id="3.40.50.620">
    <property type="entry name" value="HUPs"/>
    <property type="match status" value="1"/>
</dbReference>
<dbReference type="HAMAP" id="MF_00193">
    <property type="entry name" value="NadE_ammonia_dep"/>
    <property type="match status" value="1"/>
</dbReference>
<dbReference type="InterPro" id="IPR022310">
    <property type="entry name" value="NAD/GMP_synthase"/>
</dbReference>
<dbReference type="InterPro" id="IPR003694">
    <property type="entry name" value="NAD_synthase"/>
</dbReference>
<dbReference type="InterPro" id="IPR022926">
    <property type="entry name" value="NH(3)-dep_NAD(+)_synth"/>
</dbReference>
<dbReference type="InterPro" id="IPR014729">
    <property type="entry name" value="Rossmann-like_a/b/a_fold"/>
</dbReference>
<dbReference type="NCBIfam" id="TIGR00552">
    <property type="entry name" value="nadE"/>
    <property type="match status" value="1"/>
</dbReference>
<dbReference type="NCBIfam" id="NF001979">
    <property type="entry name" value="PRK00768.1"/>
    <property type="match status" value="1"/>
</dbReference>
<dbReference type="PANTHER" id="PTHR23090">
    <property type="entry name" value="NH 3 /GLUTAMINE-DEPENDENT NAD + SYNTHETASE"/>
    <property type="match status" value="1"/>
</dbReference>
<dbReference type="PANTHER" id="PTHR23090:SF7">
    <property type="entry name" value="NH(3)-DEPENDENT NAD(+) SYNTHETASE"/>
    <property type="match status" value="1"/>
</dbReference>
<dbReference type="Pfam" id="PF02540">
    <property type="entry name" value="NAD_synthase"/>
    <property type="match status" value="1"/>
</dbReference>
<dbReference type="SUPFAM" id="SSF52402">
    <property type="entry name" value="Adenine nucleotide alpha hydrolases-like"/>
    <property type="match status" value="1"/>
</dbReference>
<organism>
    <name type="scientific">Exiguobacterium sp. (strain ATCC BAA-1283 / AT1b)</name>
    <dbReference type="NCBI Taxonomy" id="360911"/>
    <lineage>
        <taxon>Bacteria</taxon>
        <taxon>Bacillati</taxon>
        <taxon>Bacillota</taxon>
        <taxon>Bacilli</taxon>
        <taxon>Bacillales</taxon>
        <taxon>Bacillales Family XII. Incertae Sedis</taxon>
        <taxon>Exiguobacterium</taxon>
    </lineage>
</organism>
<sequence>MQQHIIESTHVKPTINPKEEIRQRIDFLKAYVKRAGAKGLVLGISGGQDSSLAGKLCQLAMEELREETGDEYTFYAIRLPYGEQHDEHDAQLALEFIRPDKSFTVNIKPAVDASVEAFHRATGLELSDFHKGNTKARERMKAQYDIAATFGALVVGTDHAAEYVTGFYTKHGDGACDLTPLTGLNKRQGKALLHELEAHERVIYKVPTADLEDGRPGLPDEVALGMTYDQLDDYLEGKTIDPTIAERIETIFKRSRHKHHMPASLYDEWWQ</sequence>
<feature type="chain" id="PRO_1000204018" description="NH(3)-dependent NAD(+) synthetase">
    <location>
        <begin position="1"/>
        <end position="271"/>
    </location>
</feature>
<feature type="binding site" evidence="1">
    <location>
        <begin position="43"/>
        <end position="50"/>
    </location>
    <ligand>
        <name>ATP</name>
        <dbReference type="ChEBI" id="CHEBI:30616"/>
    </ligand>
</feature>
<feature type="binding site" evidence="1">
    <location>
        <position position="49"/>
    </location>
    <ligand>
        <name>Mg(2+)</name>
        <dbReference type="ChEBI" id="CHEBI:18420"/>
    </ligand>
</feature>
<feature type="binding site" evidence="1">
    <location>
        <position position="137"/>
    </location>
    <ligand>
        <name>deamido-NAD(+)</name>
        <dbReference type="ChEBI" id="CHEBI:58437"/>
    </ligand>
</feature>
<feature type="binding site" evidence="1">
    <location>
        <position position="157"/>
    </location>
    <ligand>
        <name>ATP</name>
        <dbReference type="ChEBI" id="CHEBI:30616"/>
    </ligand>
</feature>
<feature type="binding site" evidence="1">
    <location>
        <position position="162"/>
    </location>
    <ligand>
        <name>Mg(2+)</name>
        <dbReference type="ChEBI" id="CHEBI:18420"/>
    </ligand>
</feature>
<feature type="binding site" evidence="1">
    <location>
        <position position="170"/>
    </location>
    <ligand>
        <name>deamido-NAD(+)</name>
        <dbReference type="ChEBI" id="CHEBI:58437"/>
    </ligand>
</feature>
<feature type="binding site" evidence="1">
    <location>
        <position position="177"/>
    </location>
    <ligand>
        <name>deamido-NAD(+)</name>
        <dbReference type="ChEBI" id="CHEBI:58437"/>
    </ligand>
</feature>
<feature type="binding site" evidence="1">
    <location>
        <position position="186"/>
    </location>
    <ligand>
        <name>ATP</name>
        <dbReference type="ChEBI" id="CHEBI:30616"/>
    </ligand>
</feature>
<feature type="binding site" evidence="1">
    <location>
        <position position="208"/>
    </location>
    <ligand>
        <name>ATP</name>
        <dbReference type="ChEBI" id="CHEBI:30616"/>
    </ligand>
</feature>
<feature type="binding site" evidence="1">
    <location>
        <begin position="257"/>
        <end position="258"/>
    </location>
    <ligand>
        <name>deamido-NAD(+)</name>
        <dbReference type="ChEBI" id="CHEBI:58437"/>
    </ligand>
</feature>
<accession>C4L5A2</accession>
<keyword id="KW-0067">ATP-binding</keyword>
<keyword id="KW-0436">Ligase</keyword>
<keyword id="KW-0460">Magnesium</keyword>
<keyword id="KW-0479">Metal-binding</keyword>
<keyword id="KW-0520">NAD</keyword>
<keyword id="KW-0547">Nucleotide-binding</keyword>
<proteinExistence type="inferred from homology"/>
<protein>
    <recommendedName>
        <fullName evidence="1">NH(3)-dependent NAD(+) synthetase</fullName>
        <ecNumber evidence="1">6.3.1.5</ecNumber>
    </recommendedName>
</protein>
<comment type="function">
    <text evidence="1">Catalyzes the ATP-dependent amidation of deamido-NAD to form NAD. Uses ammonia as a nitrogen source.</text>
</comment>
<comment type="catalytic activity">
    <reaction evidence="1">
        <text>deamido-NAD(+) + NH4(+) + ATP = AMP + diphosphate + NAD(+) + H(+)</text>
        <dbReference type="Rhea" id="RHEA:21188"/>
        <dbReference type="ChEBI" id="CHEBI:15378"/>
        <dbReference type="ChEBI" id="CHEBI:28938"/>
        <dbReference type="ChEBI" id="CHEBI:30616"/>
        <dbReference type="ChEBI" id="CHEBI:33019"/>
        <dbReference type="ChEBI" id="CHEBI:57540"/>
        <dbReference type="ChEBI" id="CHEBI:58437"/>
        <dbReference type="ChEBI" id="CHEBI:456215"/>
        <dbReference type="EC" id="6.3.1.5"/>
    </reaction>
</comment>
<comment type="pathway">
    <text evidence="1">Cofactor biosynthesis; NAD(+) biosynthesis; NAD(+) from deamido-NAD(+) (ammonia route): step 1/1.</text>
</comment>
<comment type="subunit">
    <text evidence="1">Homodimer.</text>
</comment>
<comment type="similarity">
    <text evidence="1">Belongs to the NAD synthetase family.</text>
</comment>
<evidence type="ECO:0000255" key="1">
    <source>
        <dbReference type="HAMAP-Rule" id="MF_00193"/>
    </source>
</evidence>
<reference key="1">
    <citation type="journal article" date="2011" name="J. Bacteriol.">
        <title>Complete genome sequence of the Thermophilic Bacterium Exiguobacterium sp. AT1b.</title>
        <authorList>
            <person name="Vishnivetskaya T.A."/>
            <person name="Lucas S."/>
            <person name="Copeland A."/>
            <person name="Lapidus A."/>
            <person name="Glavina del Rio T."/>
            <person name="Dalin E."/>
            <person name="Tice H."/>
            <person name="Bruce D.C."/>
            <person name="Goodwin L.A."/>
            <person name="Pitluck S."/>
            <person name="Saunders E."/>
            <person name="Brettin T."/>
            <person name="Detter C."/>
            <person name="Han C."/>
            <person name="Larimer F."/>
            <person name="Land M.L."/>
            <person name="Hauser L.J."/>
            <person name="Kyrpides N.C."/>
            <person name="Ovchinnikova G."/>
            <person name="Kathariou S."/>
            <person name="Ramaley R.F."/>
            <person name="Rodrigues D.F."/>
            <person name="Hendrix C."/>
            <person name="Richardson P."/>
            <person name="Tiedje J.M."/>
        </authorList>
    </citation>
    <scope>NUCLEOTIDE SEQUENCE [LARGE SCALE GENOMIC DNA]</scope>
    <source>
        <strain>ATCC BAA-1283 / AT1b</strain>
    </source>
</reference>
<gene>
    <name evidence="1" type="primary">nadE</name>
    <name type="ordered locus">EAT1b_2773</name>
</gene>